<accession>Q97ET6</accession>
<gene>
    <name evidence="1" type="primary">argJ2</name>
    <name type="ordered locus">CA_C3020</name>
</gene>
<proteinExistence type="inferred from homology"/>
<comment type="function">
    <text evidence="1">Catalyzes two activities which are involved in the cyclic version of arginine biosynthesis: the synthesis of N-acetylglutamate from glutamate and acetyl-CoA as the acetyl donor, and of ornithine by transacetylation between N(2)-acetylornithine and glutamate.</text>
</comment>
<comment type="catalytic activity">
    <reaction evidence="1">
        <text>N(2)-acetyl-L-ornithine + L-glutamate = N-acetyl-L-glutamate + L-ornithine</text>
        <dbReference type="Rhea" id="RHEA:15349"/>
        <dbReference type="ChEBI" id="CHEBI:29985"/>
        <dbReference type="ChEBI" id="CHEBI:44337"/>
        <dbReference type="ChEBI" id="CHEBI:46911"/>
        <dbReference type="ChEBI" id="CHEBI:57805"/>
        <dbReference type="EC" id="2.3.1.35"/>
    </reaction>
</comment>
<comment type="catalytic activity">
    <reaction evidence="1">
        <text>L-glutamate + acetyl-CoA = N-acetyl-L-glutamate + CoA + H(+)</text>
        <dbReference type="Rhea" id="RHEA:24292"/>
        <dbReference type="ChEBI" id="CHEBI:15378"/>
        <dbReference type="ChEBI" id="CHEBI:29985"/>
        <dbReference type="ChEBI" id="CHEBI:44337"/>
        <dbReference type="ChEBI" id="CHEBI:57287"/>
        <dbReference type="ChEBI" id="CHEBI:57288"/>
        <dbReference type="EC" id="2.3.1.1"/>
    </reaction>
</comment>
<comment type="pathway">
    <text evidence="1">Amino-acid biosynthesis; L-arginine biosynthesis; L-ornithine and N-acetyl-L-glutamate from L-glutamate and N(2)-acetyl-L-ornithine (cyclic): step 1/1.</text>
</comment>
<comment type="pathway">
    <text evidence="1">Amino-acid biosynthesis; L-arginine biosynthesis; N(2)-acetyl-L-ornithine from L-glutamate: step 1/4.</text>
</comment>
<comment type="subunit">
    <text evidence="1">Heterotetramer of two alpha and two beta chains.</text>
</comment>
<comment type="subcellular location">
    <subcellularLocation>
        <location evidence="1">Cytoplasm</location>
    </subcellularLocation>
</comment>
<comment type="similarity">
    <text evidence="1">Belongs to the ArgJ family.</text>
</comment>
<dbReference type="EC" id="2.3.1.35" evidence="1"/>
<dbReference type="EC" id="2.3.1.1" evidence="1"/>
<dbReference type="EMBL" id="AE001437">
    <property type="protein sequence ID" value="AAK80961.1"/>
    <property type="molecule type" value="Genomic_DNA"/>
</dbReference>
<dbReference type="PIR" id="F97271">
    <property type="entry name" value="F97271"/>
</dbReference>
<dbReference type="RefSeq" id="NP_349621.1">
    <property type="nucleotide sequence ID" value="NC_003030.1"/>
</dbReference>
<dbReference type="SMR" id="Q97ET6"/>
<dbReference type="STRING" id="272562.CA_C3020"/>
<dbReference type="KEGG" id="cac:CA_C3020"/>
<dbReference type="PATRIC" id="fig|272562.8.peg.3203"/>
<dbReference type="eggNOG" id="COG1364">
    <property type="taxonomic scope" value="Bacteria"/>
</dbReference>
<dbReference type="HOGENOM" id="CLU_027172_1_0_9"/>
<dbReference type="OrthoDB" id="9804242at2"/>
<dbReference type="UniPathway" id="UPA00068">
    <property type="reaction ID" value="UER00106"/>
</dbReference>
<dbReference type="UniPathway" id="UPA00068">
    <property type="reaction ID" value="UER00111"/>
</dbReference>
<dbReference type="Proteomes" id="UP000000814">
    <property type="component" value="Chromosome"/>
</dbReference>
<dbReference type="GO" id="GO:0005737">
    <property type="term" value="C:cytoplasm"/>
    <property type="evidence" value="ECO:0007669"/>
    <property type="project" value="UniProtKB-SubCell"/>
</dbReference>
<dbReference type="GO" id="GO:0004358">
    <property type="term" value="F:glutamate N-acetyltransferase activity"/>
    <property type="evidence" value="ECO:0007669"/>
    <property type="project" value="UniProtKB-UniRule"/>
</dbReference>
<dbReference type="GO" id="GO:0004042">
    <property type="term" value="F:L-glutamate N-acetyltransferase activity"/>
    <property type="evidence" value="ECO:0007669"/>
    <property type="project" value="UniProtKB-UniRule"/>
</dbReference>
<dbReference type="GO" id="GO:0006526">
    <property type="term" value="P:L-arginine biosynthetic process"/>
    <property type="evidence" value="ECO:0007669"/>
    <property type="project" value="UniProtKB-UniRule"/>
</dbReference>
<dbReference type="GO" id="GO:0006592">
    <property type="term" value="P:ornithine biosynthetic process"/>
    <property type="evidence" value="ECO:0007669"/>
    <property type="project" value="TreeGrafter"/>
</dbReference>
<dbReference type="CDD" id="cd02152">
    <property type="entry name" value="OAT"/>
    <property type="match status" value="1"/>
</dbReference>
<dbReference type="FunFam" id="3.10.20.340:FF:000003">
    <property type="entry name" value="Arginine biosynthesis bifunctional protein ArgJ"/>
    <property type="match status" value="1"/>
</dbReference>
<dbReference type="Gene3D" id="3.10.20.340">
    <property type="entry name" value="ArgJ beta chain, C-terminal domain"/>
    <property type="match status" value="1"/>
</dbReference>
<dbReference type="Gene3D" id="3.60.70.12">
    <property type="entry name" value="L-amino peptidase D-ALA esterase/amidase"/>
    <property type="match status" value="1"/>
</dbReference>
<dbReference type="HAMAP" id="MF_01106">
    <property type="entry name" value="ArgJ"/>
    <property type="match status" value="1"/>
</dbReference>
<dbReference type="InterPro" id="IPR002813">
    <property type="entry name" value="Arg_biosynth_ArgJ"/>
</dbReference>
<dbReference type="InterPro" id="IPR016117">
    <property type="entry name" value="ArgJ-like_dom_sf"/>
</dbReference>
<dbReference type="InterPro" id="IPR042195">
    <property type="entry name" value="ArgJ_beta_C"/>
</dbReference>
<dbReference type="NCBIfam" id="TIGR00120">
    <property type="entry name" value="ArgJ"/>
    <property type="match status" value="1"/>
</dbReference>
<dbReference type="NCBIfam" id="NF003802">
    <property type="entry name" value="PRK05388.1"/>
    <property type="match status" value="1"/>
</dbReference>
<dbReference type="PANTHER" id="PTHR23100">
    <property type="entry name" value="ARGININE BIOSYNTHESIS BIFUNCTIONAL PROTEIN ARGJ"/>
    <property type="match status" value="1"/>
</dbReference>
<dbReference type="PANTHER" id="PTHR23100:SF0">
    <property type="entry name" value="ARGININE BIOSYNTHESIS BIFUNCTIONAL PROTEIN ARGJ, MITOCHONDRIAL"/>
    <property type="match status" value="1"/>
</dbReference>
<dbReference type="Pfam" id="PF01960">
    <property type="entry name" value="ArgJ"/>
    <property type="match status" value="1"/>
</dbReference>
<dbReference type="SUPFAM" id="SSF56266">
    <property type="entry name" value="DmpA/ArgJ-like"/>
    <property type="match status" value="1"/>
</dbReference>
<feature type="chain" id="PRO_0000002153" description="Arginine biosynthesis bifunctional protein ArgJ alpha chain 2" evidence="1">
    <location>
        <begin position="1"/>
        <end position="177"/>
    </location>
</feature>
<feature type="chain" id="PRO_0000002154" description="Arginine biosynthesis bifunctional protein ArgJ beta chain 2" evidence="1">
    <location>
        <begin position="178"/>
        <end position="388"/>
    </location>
</feature>
<feature type="active site" description="Nucleophile" evidence="1">
    <location>
        <position position="178"/>
    </location>
</feature>
<feature type="binding site" evidence="1">
    <location>
        <position position="145"/>
    </location>
    <ligand>
        <name>substrate</name>
    </ligand>
</feature>
<feature type="binding site" evidence="1">
    <location>
        <position position="167"/>
    </location>
    <ligand>
        <name>substrate</name>
    </ligand>
</feature>
<feature type="binding site" evidence="1">
    <location>
        <position position="178"/>
    </location>
    <ligand>
        <name>substrate</name>
    </ligand>
</feature>
<feature type="binding site" evidence="1">
    <location>
        <position position="257"/>
    </location>
    <ligand>
        <name>substrate</name>
    </ligand>
</feature>
<feature type="binding site" evidence="1">
    <location>
        <position position="381"/>
    </location>
    <ligand>
        <name>substrate</name>
    </ligand>
</feature>
<feature type="site" description="Involved in the stabilization of negative charge on the oxyanion by the formation of the oxyanion hole" evidence="1">
    <location>
        <position position="108"/>
    </location>
</feature>
<feature type="site" description="Involved in the stabilization of negative charge on the oxyanion by the formation of the oxyanion hole" evidence="1">
    <location>
        <position position="109"/>
    </location>
</feature>
<feature type="site" description="Cleavage; by autolysis" evidence="1">
    <location>
        <begin position="177"/>
        <end position="178"/>
    </location>
</feature>
<reference key="1">
    <citation type="journal article" date="2001" name="J. Bacteriol.">
        <title>Genome sequence and comparative analysis of the solvent-producing bacterium Clostridium acetobutylicum.</title>
        <authorList>
            <person name="Noelling J."/>
            <person name="Breton G."/>
            <person name="Omelchenko M.V."/>
            <person name="Makarova K.S."/>
            <person name="Zeng Q."/>
            <person name="Gibson R."/>
            <person name="Lee H.M."/>
            <person name="Dubois J."/>
            <person name="Qiu D."/>
            <person name="Hitti J."/>
            <person name="Wolf Y.I."/>
            <person name="Tatusov R.L."/>
            <person name="Sabathe F."/>
            <person name="Doucette-Stamm L.A."/>
            <person name="Soucaille P."/>
            <person name="Daly M.J."/>
            <person name="Bennett G.N."/>
            <person name="Koonin E.V."/>
            <person name="Smith D.R."/>
        </authorList>
    </citation>
    <scope>NUCLEOTIDE SEQUENCE [LARGE SCALE GENOMIC DNA]</scope>
    <source>
        <strain>ATCC 824 / DSM 792 / JCM 1419 / IAM 19013 / LMG 5710 / NBRC 13948 / NRRL B-527 / VKM B-1787 / 2291 / W</strain>
    </source>
</reference>
<keyword id="KW-0012">Acyltransferase</keyword>
<keyword id="KW-0028">Amino-acid biosynthesis</keyword>
<keyword id="KW-0055">Arginine biosynthesis</keyword>
<keyword id="KW-0068">Autocatalytic cleavage</keyword>
<keyword id="KW-0963">Cytoplasm</keyword>
<keyword id="KW-0511">Multifunctional enzyme</keyword>
<keyword id="KW-1185">Reference proteome</keyword>
<keyword id="KW-0808">Transferase</keyword>
<organism>
    <name type="scientific">Clostridium acetobutylicum (strain ATCC 824 / DSM 792 / JCM 1419 / IAM 19013 / LMG 5710 / NBRC 13948 / NRRL B-527 / VKM B-1787 / 2291 / W)</name>
    <dbReference type="NCBI Taxonomy" id="272562"/>
    <lineage>
        <taxon>Bacteria</taxon>
        <taxon>Bacillati</taxon>
        <taxon>Bacillota</taxon>
        <taxon>Clostridia</taxon>
        <taxon>Eubacteriales</taxon>
        <taxon>Clostridiaceae</taxon>
        <taxon>Clostridium</taxon>
    </lineage>
</organism>
<sequence>MINYMIPKGFLCCGKHVGIKKRKLDLGVVYSEKLCSAAAVFTKNKFCGIPIIVGKENIKDNKLQSIVVTSGVANVATGEEGLKNTYRILNKLSCELNIKSENILPSSTGIIGKQLPIDCIITGINGIKSSLSKYNWEEFNRAIMTTDKELKIKSCKIGDATVLGIAKGSGMIEPNMATMLAYFFTDASIKAVELKGILKRAVDKSFNMISIDHDTSTSDTAAILANGYVGNVNLEVFEKTFTDMCIDMAKDIVRDGEGVSKLIEATVMGCSSFESAKVIAKSIINSPLVKIAIYGSDPNWGRIAMAIGKSFEDDVDPLKIEIAFNSNVIYDKGKIYEENFDCIERYLRDNNECKIQANLNVGDFAATVWGSDFTEDYIRINSYYTKRK</sequence>
<evidence type="ECO:0000255" key="1">
    <source>
        <dbReference type="HAMAP-Rule" id="MF_01106"/>
    </source>
</evidence>
<protein>
    <recommendedName>
        <fullName evidence="1">Arginine biosynthesis bifunctional protein ArgJ 2</fullName>
    </recommendedName>
    <domain>
        <recommendedName>
            <fullName evidence="1">Glutamate N-acetyltransferase 2</fullName>
            <ecNumber evidence="1">2.3.1.35</ecNumber>
        </recommendedName>
        <alternativeName>
            <fullName evidence="1">Ornithine acetyltransferase 2</fullName>
            <shortName evidence="1">OATase 2</shortName>
        </alternativeName>
        <alternativeName>
            <fullName evidence="1">Ornithine transacetylase 2</fullName>
        </alternativeName>
    </domain>
    <domain>
        <recommendedName>
            <fullName evidence="1">Amino-acid acetyltransferase 2</fullName>
            <ecNumber evidence="1">2.3.1.1</ecNumber>
        </recommendedName>
        <alternativeName>
            <fullName evidence="1">N-acetylglutamate synthase 2</fullName>
            <shortName evidence="1">AGSase 2</shortName>
        </alternativeName>
    </domain>
    <component>
        <recommendedName>
            <fullName evidence="1">Arginine biosynthesis bifunctional protein ArgJ alpha chain 2</fullName>
        </recommendedName>
    </component>
    <component>
        <recommendedName>
            <fullName evidence="1">Arginine biosynthesis bifunctional protein ArgJ beta chain 2</fullName>
        </recommendedName>
    </component>
</protein>
<name>ARGJ2_CLOAB</name>